<sequence length="80" mass="8704">MATSGRLLCLCLVLGLVFESLGHPGARLPKDGKRAVSTRHAHDDPFAHEVNCGGFPCMFSCCENDVCMELNCEYFPSLGQ</sequence>
<reference key="1">
    <citation type="journal article" date="2015" name="Genome Biol. Evol.">
        <title>Molecular diversity and gene evolution of the venom arsenal of Terebridae predatory marine snails.</title>
        <authorList>
            <person name="Gorson J."/>
            <person name="Ramrattan G."/>
            <person name="Verdes A."/>
            <person name="Wright E.M."/>
            <person name="Kantor Y."/>
            <person name="Rajaram Srinivasan R."/>
            <person name="Musunuri R."/>
            <person name="Packer D."/>
            <person name="Albano G."/>
            <person name="Qiu W.G."/>
            <person name="Holford M."/>
        </authorList>
    </citation>
    <scope>NUCLEOTIDE SEQUENCE [MRNA]</scope>
    <source>
        <tissue>Venom duct</tissue>
    </source>
</reference>
<organism>
    <name type="scientific">Terebra anilis</name>
    <name type="common">Auger snail</name>
    <name type="synonym">Cinguloterebra anilis</name>
    <dbReference type="NCBI Taxonomy" id="553697"/>
    <lineage>
        <taxon>Eukaryota</taxon>
        <taxon>Metazoa</taxon>
        <taxon>Spiralia</taxon>
        <taxon>Lophotrochozoa</taxon>
        <taxon>Mollusca</taxon>
        <taxon>Gastropoda</taxon>
        <taxon>Caenogastropoda</taxon>
        <taxon>Neogastropoda</taxon>
        <taxon>Conoidea</taxon>
        <taxon>Terebridae</taxon>
        <taxon>Terebra</taxon>
    </lineage>
</organism>
<name>T61_TERAN</name>
<keyword id="KW-0165">Cleavage on pair of basic residues</keyword>
<keyword id="KW-1015">Disulfide bond</keyword>
<keyword id="KW-0964">Secreted</keyword>
<keyword id="KW-0732">Signal</keyword>
<keyword id="KW-0800">Toxin</keyword>
<proteinExistence type="inferred from homology"/>
<feature type="signal peptide" evidence="1">
    <location>
        <begin position="1"/>
        <end position="21"/>
    </location>
</feature>
<feature type="propeptide" id="PRO_0000435068" evidence="3">
    <location>
        <begin position="22"/>
        <end position="34"/>
    </location>
</feature>
<feature type="chain" id="PRO_0000435069" description="Teretoxin Tan6.1">
    <location>
        <begin position="35"/>
        <end position="80"/>
    </location>
</feature>
<dbReference type="SMR" id="P0DN51"/>
<dbReference type="TCDB" id="8.B.37.1.2">
    <property type="family name" value="the conotoxin-teretoxin (c-t) family"/>
</dbReference>
<dbReference type="GO" id="GO:0005576">
    <property type="term" value="C:extracellular region"/>
    <property type="evidence" value="ECO:0007669"/>
    <property type="project" value="UniProtKB-SubCell"/>
</dbReference>
<dbReference type="GO" id="GO:0090729">
    <property type="term" value="F:toxin activity"/>
    <property type="evidence" value="ECO:0007669"/>
    <property type="project" value="UniProtKB-KW"/>
</dbReference>
<evidence type="ECO:0000255" key="1"/>
<evidence type="ECO:0000303" key="2">
    <source>
    </source>
</evidence>
<evidence type="ECO:0000305" key="3"/>
<evidence type="ECO:0000305" key="4">
    <source>
    </source>
</evidence>
<accession>P0DN51</accession>
<protein>
    <recommendedName>
        <fullName evidence="2">Teretoxin Tan6.1</fullName>
    </recommendedName>
</protein>
<comment type="subcellular location">
    <subcellularLocation>
        <location evidence="4">Secreted</location>
    </subcellularLocation>
</comment>
<comment type="tissue specificity">
    <text evidence="4">Expressed by the venom duct.</text>
</comment>
<comment type="domain">
    <text>The cysteine framework is VI/VII (C-C-CC-C-C).</text>
</comment>
<comment type="PTM">
    <text evidence="3">Contains 3 disulfide bonds.</text>
</comment>
<comment type="similarity">
    <text>Belongs to the teretoxin M (TM) superfamily.</text>
</comment>